<name>FTSX_AERHY</name>
<accession>Q9AGF2</accession>
<organism>
    <name type="scientific">Aeromonas hydrophila</name>
    <dbReference type="NCBI Taxonomy" id="644"/>
    <lineage>
        <taxon>Bacteria</taxon>
        <taxon>Pseudomonadati</taxon>
        <taxon>Pseudomonadota</taxon>
        <taxon>Gammaproteobacteria</taxon>
        <taxon>Aeromonadales</taxon>
        <taxon>Aeromonadaceae</taxon>
        <taxon>Aeromonas</taxon>
    </lineage>
</organism>
<gene>
    <name evidence="5" type="primary">ftsX</name>
</gene>
<feature type="chain" id="PRO_0000421700" description="Cell division protein FtsX">
    <location>
        <begin position="1"/>
        <end position="317"/>
    </location>
</feature>
<feature type="topological domain" description="Cytoplasmic" evidence="1 2">
    <location>
        <begin position="1"/>
        <end position="39"/>
    </location>
</feature>
<feature type="transmembrane region" description="Helical" evidence="2">
    <location>
        <begin position="40"/>
        <end position="60"/>
    </location>
</feature>
<feature type="topological domain" description="Periplasmic" evidence="1 2">
    <location>
        <begin position="61"/>
        <end position="188"/>
    </location>
</feature>
<feature type="transmembrane region" description="Helical" evidence="2">
    <location>
        <begin position="189"/>
        <end position="209"/>
    </location>
</feature>
<feature type="topological domain" description="Cytoplasmic" evidence="1 2">
    <location>
        <begin position="210"/>
        <end position="241"/>
    </location>
</feature>
<feature type="transmembrane region" description="Helical" evidence="2">
    <location>
        <begin position="242"/>
        <end position="262"/>
    </location>
</feature>
<feature type="topological domain" description="Periplasmic" evidence="1 2">
    <location>
        <begin position="263"/>
        <end position="280"/>
    </location>
</feature>
<feature type="transmembrane region" description="Helical" evidence="2">
    <location>
        <begin position="281"/>
        <end position="301"/>
    </location>
</feature>
<feature type="topological domain" description="Cytoplasmic" evidence="1 2">
    <location>
        <begin position="302"/>
        <end position="317"/>
    </location>
</feature>
<proteinExistence type="inferred from homology"/>
<dbReference type="EMBL" id="AF334761">
    <property type="protein sequence ID" value="AAK20882.1"/>
    <property type="molecule type" value="Genomic_DNA"/>
</dbReference>
<dbReference type="SMR" id="Q9AGF2"/>
<dbReference type="eggNOG" id="COG2177">
    <property type="taxonomic scope" value="Bacteria"/>
</dbReference>
<dbReference type="GO" id="GO:0032153">
    <property type="term" value="C:cell division site"/>
    <property type="evidence" value="ECO:0007669"/>
    <property type="project" value="TreeGrafter"/>
</dbReference>
<dbReference type="GO" id="GO:0009276">
    <property type="term" value="C:Gram-negative-bacterium-type cell wall"/>
    <property type="evidence" value="ECO:0000250"/>
    <property type="project" value="UniProtKB"/>
</dbReference>
<dbReference type="GO" id="GO:0005886">
    <property type="term" value="C:plasma membrane"/>
    <property type="evidence" value="ECO:0007669"/>
    <property type="project" value="UniProtKB-SubCell"/>
</dbReference>
<dbReference type="GO" id="GO:0051301">
    <property type="term" value="P:cell division"/>
    <property type="evidence" value="ECO:0000317"/>
    <property type="project" value="UniProtKB"/>
</dbReference>
<dbReference type="FunFam" id="3.30.70.3040:FF:000002">
    <property type="entry name" value="Cell division protein FtsX"/>
    <property type="match status" value="1"/>
</dbReference>
<dbReference type="Gene3D" id="3.30.70.3040">
    <property type="match status" value="1"/>
</dbReference>
<dbReference type="InterPro" id="IPR003838">
    <property type="entry name" value="ABC3_permease_C"/>
</dbReference>
<dbReference type="InterPro" id="IPR004513">
    <property type="entry name" value="FtsX"/>
</dbReference>
<dbReference type="InterPro" id="IPR040690">
    <property type="entry name" value="FtsX_ECD"/>
</dbReference>
<dbReference type="InterPro" id="IPR047590">
    <property type="entry name" value="FtsX_proteobact"/>
</dbReference>
<dbReference type="NCBIfam" id="TIGR00439">
    <property type="entry name" value="FtsX_Gneg"/>
    <property type="match status" value="1"/>
</dbReference>
<dbReference type="PANTHER" id="PTHR47755">
    <property type="entry name" value="CELL DIVISION PROTEIN FTSX"/>
    <property type="match status" value="1"/>
</dbReference>
<dbReference type="PANTHER" id="PTHR47755:SF1">
    <property type="entry name" value="CELL DIVISION PROTEIN FTSX"/>
    <property type="match status" value="1"/>
</dbReference>
<dbReference type="Pfam" id="PF02687">
    <property type="entry name" value="FtsX"/>
    <property type="match status" value="1"/>
</dbReference>
<dbReference type="Pfam" id="PF18075">
    <property type="entry name" value="FtsX_ECD"/>
    <property type="match status" value="1"/>
</dbReference>
<dbReference type="PIRSF" id="PIRSF003097">
    <property type="entry name" value="FtsX"/>
    <property type="match status" value="1"/>
</dbReference>
<reference evidence="4 5" key="1">
    <citation type="journal article" date="2001" name="FEMS Microbiol. Lett.">
        <title>The cell division genes (ftsE and X) of Aeromonas hydrophila and their relationship with opsonophagocytosis.</title>
        <authorList>
            <person name="Merino S."/>
            <person name="Altarriba M."/>
            <person name="Gavin R."/>
            <person name="Izquierdo L."/>
            <person name="Tomas J.M."/>
        </authorList>
    </citation>
    <scope>NUCLEOTIDE SEQUENCE [GENOMIC DNA]</scope>
    <scope>FUNCTION</scope>
    <scope>OPERON STRUCTURE</scope>
    <source>
        <strain evidence="3">AH-3</strain>
    </source>
</reference>
<protein>
    <recommendedName>
        <fullName evidence="1 5">Cell division protein FtsX</fullName>
    </recommendedName>
</protein>
<comment type="function">
    <text evidence="1 3">Part of the ABC transporter FtsEX involved in cellular division. Encoded in an operon consisting of genes ftsY, ftsE and ftsX.</text>
</comment>
<comment type="subunit">
    <text evidence="1">Forms a membrane-associated complex with FtsE.</text>
</comment>
<comment type="subcellular location">
    <subcellularLocation>
        <location evidence="1 2">Cell inner membrane</location>
        <topology evidence="1 2">Multi-pass membrane protein</topology>
    </subcellularLocation>
</comment>
<comment type="similarity">
    <text evidence="2">Belongs to the ABC-4 integral membrane protein family. FtsX subfamily.</text>
</comment>
<evidence type="ECO:0000250" key="1">
    <source>
        <dbReference type="UniProtKB" id="P0AC30"/>
    </source>
</evidence>
<evidence type="ECO:0000255" key="2"/>
<evidence type="ECO:0000269" key="3">
    <source>
    </source>
</evidence>
<evidence type="ECO:0000305" key="4"/>
<evidence type="ECO:0000312" key="5">
    <source>
        <dbReference type="EMBL" id="AAK20882.1"/>
    </source>
</evidence>
<sequence length="317" mass="35649">MAIVRHKQPPLRRFMMYWVDHARQAFSSLGELWRNPLASLMTLAVLGVSLALPSCFHVLLKNAEVVEGSWQTSSQISLYLRKDLPEQSILDMKQRILLYPEVESVTYMSRDEALKEFREISGFGDALDYLDSNPLPPVLSVIPDPRWQNPEGAAELLNKLNNEDGVEQGKLDLQWLTRLQGIMNLLRHTITGIAVLLLSAVLLIVGNTLRLNILNQRSEIEVLKLVGATDAFIHRPFLYTGIWFGVIGGMLAWWLTEVMVIWSEGVVNELAGLYNSNFRLVGMGAVDGINLILLGALLGLIASWFSVHRHIRDIEPS</sequence>
<keyword id="KW-0131">Cell cycle</keyword>
<keyword id="KW-0132">Cell division</keyword>
<keyword id="KW-0997">Cell inner membrane</keyword>
<keyword id="KW-1003">Cell membrane</keyword>
<keyword id="KW-0472">Membrane</keyword>
<keyword id="KW-0812">Transmembrane</keyword>
<keyword id="KW-1133">Transmembrane helix</keyword>